<comment type="similarity">
    <text evidence="1">Belongs to the universal ribosomal protein uS9 family.</text>
</comment>
<keyword id="KW-0687">Ribonucleoprotein</keyword>
<keyword id="KW-0689">Ribosomal protein</keyword>
<dbReference type="EMBL" id="CP001020">
    <property type="protein sequence ID" value="ACJ19570.1"/>
    <property type="molecule type" value="Genomic_DNA"/>
</dbReference>
<dbReference type="RefSeq" id="WP_005770424.1">
    <property type="nucleotide sequence ID" value="NC_011528.1"/>
</dbReference>
<dbReference type="SMR" id="B6J4Q5"/>
<dbReference type="KEGG" id="cbc:CbuK_0259"/>
<dbReference type="HOGENOM" id="CLU_046483_2_1_6"/>
<dbReference type="GO" id="GO:0022627">
    <property type="term" value="C:cytosolic small ribosomal subunit"/>
    <property type="evidence" value="ECO:0007669"/>
    <property type="project" value="TreeGrafter"/>
</dbReference>
<dbReference type="GO" id="GO:0003723">
    <property type="term" value="F:RNA binding"/>
    <property type="evidence" value="ECO:0007669"/>
    <property type="project" value="TreeGrafter"/>
</dbReference>
<dbReference type="GO" id="GO:0003735">
    <property type="term" value="F:structural constituent of ribosome"/>
    <property type="evidence" value="ECO:0007669"/>
    <property type="project" value="InterPro"/>
</dbReference>
<dbReference type="GO" id="GO:0006412">
    <property type="term" value="P:translation"/>
    <property type="evidence" value="ECO:0007669"/>
    <property type="project" value="UniProtKB-UniRule"/>
</dbReference>
<dbReference type="FunFam" id="3.30.230.10:FF:000001">
    <property type="entry name" value="30S ribosomal protein S9"/>
    <property type="match status" value="1"/>
</dbReference>
<dbReference type="Gene3D" id="3.30.230.10">
    <property type="match status" value="1"/>
</dbReference>
<dbReference type="HAMAP" id="MF_00532_B">
    <property type="entry name" value="Ribosomal_uS9_B"/>
    <property type="match status" value="1"/>
</dbReference>
<dbReference type="InterPro" id="IPR020568">
    <property type="entry name" value="Ribosomal_Su5_D2-typ_SF"/>
</dbReference>
<dbReference type="InterPro" id="IPR000754">
    <property type="entry name" value="Ribosomal_uS9"/>
</dbReference>
<dbReference type="InterPro" id="IPR023035">
    <property type="entry name" value="Ribosomal_uS9_bac/plastid"/>
</dbReference>
<dbReference type="InterPro" id="IPR020574">
    <property type="entry name" value="Ribosomal_uS9_CS"/>
</dbReference>
<dbReference type="InterPro" id="IPR014721">
    <property type="entry name" value="Ribsml_uS5_D2-typ_fold_subgr"/>
</dbReference>
<dbReference type="NCBIfam" id="NF001099">
    <property type="entry name" value="PRK00132.1"/>
    <property type="match status" value="1"/>
</dbReference>
<dbReference type="PANTHER" id="PTHR21569">
    <property type="entry name" value="RIBOSOMAL PROTEIN S9"/>
    <property type="match status" value="1"/>
</dbReference>
<dbReference type="PANTHER" id="PTHR21569:SF1">
    <property type="entry name" value="SMALL RIBOSOMAL SUBUNIT PROTEIN US9M"/>
    <property type="match status" value="1"/>
</dbReference>
<dbReference type="Pfam" id="PF00380">
    <property type="entry name" value="Ribosomal_S9"/>
    <property type="match status" value="1"/>
</dbReference>
<dbReference type="SUPFAM" id="SSF54211">
    <property type="entry name" value="Ribosomal protein S5 domain 2-like"/>
    <property type="match status" value="1"/>
</dbReference>
<dbReference type="PROSITE" id="PS00360">
    <property type="entry name" value="RIBOSOMAL_S9"/>
    <property type="match status" value="1"/>
</dbReference>
<evidence type="ECO:0000255" key="1">
    <source>
        <dbReference type="HAMAP-Rule" id="MF_00532"/>
    </source>
</evidence>
<evidence type="ECO:0000305" key="2"/>
<proteinExistence type="inferred from homology"/>
<organism>
    <name type="scientific">Coxiella burnetii (strain CbuK_Q154)</name>
    <name type="common">Coxiella burnetii (strain Q154)</name>
    <dbReference type="NCBI Taxonomy" id="434924"/>
    <lineage>
        <taxon>Bacteria</taxon>
        <taxon>Pseudomonadati</taxon>
        <taxon>Pseudomonadota</taxon>
        <taxon>Gammaproteobacteria</taxon>
        <taxon>Legionellales</taxon>
        <taxon>Coxiellaceae</taxon>
        <taxon>Coxiella</taxon>
    </lineage>
</organism>
<accession>B6J4Q5</accession>
<name>RS9_COXB1</name>
<reference key="1">
    <citation type="journal article" date="2009" name="Infect. Immun.">
        <title>Comparative genomics reveal extensive transposon-mediated genomic plasticity and diversity among potential effector proteins within the genus Coxiella.</title>
        <authorList>
            <person name="Beare P.A."/>
            <person name="Unsworth N."/>
            <person name="Andoh M."/>
            <person name="Voth D.E."/>
            <person name="Omsland A."/>
            <person name="Gilk S.D."/>
            <person name="Williams K.P."/>
            <person name="Sobral B.W."/>
            <person name="Kupko J.J. III"/>
            <person name="Porcella S.F."/>
            <person name="Samuel J.E."/>
            <person name="Heinzen R.A."/>
        </authorList>
    </citation>
    <scope>NUCLEOTIDE SEQUENCE [LARGE SCALE GENOMIC DNA]</scope>
    <source>
        <strain>CbuK_Q154</strain>
    </source>
</reference>
<sequence>MAQAAKKQNLGMGRRKTSSARVFLRSGTGQIIINGLPLDEYFGRETARMVVRQPLVKLDVQSRFDVYATVQGGGDSGQAGAIRHGITRALIQYDEEGGEGGTWRSTLRKAGFVTRDPRMVERKKVGLHGARRGTQFSKR</sequence>
<gene>
    <name evidence="1" type="primary">rpsI</name>
    <name type="ordered locus">CbuK_0259</name>
</gene>
<protein>
    <recommendedName>
        <fullName evidence="1">Small ribosomal subunit protein uS9</fullName>
    </recommendedName>
    <alternativeName>
        <fullName evidence="2">30S ribosomal protein S9</fullName>
    </alternativeName>
</protein>
<feature type="chain" id="PRO_1000128109" description="Small ribosomal subunit protein uS9">
    <location>
        <begin position="1"/>
        <end position="139"/>
    </location>
</feature>